<sequence>MSAIVDIFAREILDSRGNPTVECDVLLESGVMGRAAVPSGASTGQKEALELRDGDKSRYSGKGVLKAVEHVNNQIAQALIGIDANEQSYIDQIMIELDGTENKGNLGANATLAVSMAVARAAAEDSGLPLYRYLGGAGPMSLPVPMMNVINGGEHANNSLNIQEFMIMPVGAKSFREALRCGAEIFHALKKLCDSKGFPTTVGDEGGFAPNLNSHKEALQLMVEATEAAGYKAGEDVLFALDCASSEFYKDGKYHLEAEGRSYTNAEFAEYLEGLVNEFPIISIEDGMDENDWEGWKLLTEKLGGRVQLVGDDLFVTNPKILAEGIEKGVANALLVKVNQIGTLSETLKAVDLAKRNRYASVMSHRSGETEDSTIADLAVATNCMQIKTGSLSRSDRMAKYNQLLRIEEELAEAADYPSKAAFYQLGK</sequence>
<proteinExistence type="inferred from homology"/>
<dbReference type="EC" id="4.2.1.11" evidence="1"/>
<dbReference type="EMBL" id="AE002098">
    <property type="protein sequence ID" value="AAF41661.1"/>
    <property type="molecule type" value="Genomic_DNA"/>
</dbReference>
<dbReference type="PIR" id="D81100">
    <property type="entry name" value="D81100"/>
</dbReference>
<dbReference type="RefSeq" id="NP_274305.1">
    <property type="nucleotide sequence ID" value="NC_003112.2"/>
</dbReference>
<dbReference type="RefSeq" id="WP_002222383.1">
    <property type="nucleotide sequence ID" value="NC_003112.2"/>
</dbReference>
<dbReference type="SMR" id="Q9JZ53"/>
<dbReference type="FunCoup" id="Q9JZ53">
    <property type="interactions" value="468"/>
</dbReference>
<dbReference type="STRING" id="122586.NMB1285"/>
<dbReference type="PaxDb" id="122586-NMB1285"/>
<dbReference type="KEGG" id="nme:NMB1285"/>
<dbReference type="PATRIC" id="fig|122586.8.peg.1610"/>
<dbReference type="HOGENOM" id="CLU_031223_2_1_4"/>
<dbReference type="InParanoid" id="Q9JZ53"/>
<dbReference type="OrthoDB" id="9804716at2"/>
<dbReference type="UniPathway" id="UPA00109">
    <property type="reaction ID" value="UER00187"/>
</dbReference>
<dbReference type="Proteomes" id="UP000000425">
    <property type="component" value="Chromosome"/>
</dbReference>
<dbReference type="GO" id="GO:0009986">
    <property type="term" value="C:cell surface"/>
    <property type="evidence" value="ECO:0007669"/>
    <property type="project" value="UniProtKB-SubCell"/>
</dbReference>
<dbReference type="GO" id="GO:0031240">
    <property type="term" value="C:external side of cell outer membrane"/>
    <property type="evidence" value="ECO:0000314"/>
    <property type="project" value="CAFA"/>
</dbReference>
<dbReference type="GO" id="GO:0005576">
    <property type="term" value="C:extracellular region"/>
    <property type="evidence" value="ECO:0007669"/>
    <property type="project" value="UniProtKB-SubCell"/>
</dbReference>
<dbReference type="GO" id="GO:0000015">
    <property type="term" value="C:phosphopyruvate hydratase complex"/>
    <property type="evidence" value="ECO:0000318"/>
    <property type="project" value="GO_Central"/>
</dbReference>
<dbReference type="GO" id="GO:0000287">
    <property type="term" value="F:magnesium ion binding"/>
    <property type="evidence" value="ECO:0007669"/>
    <property type="project" value="UniProtKB-UniRule"/>
</dbReference>
<dbReference type="GO" id="GO:0004634">
    <property type="term" value="F:phosphopyruvate hydratase activity"/>
    <property type="evidence" value="ECO:0000318"/>
    <property type="project" value="GO_Central"/>
</dbReference>
<dbReference type="GO" id="GO:0002020">
    <property type="term" value="F:protease binding"/>
    <property type="evidence" value="ECO:0000353"/>
    <property type="project" value="CAFA"/>
</dbReference>
<dbReference type="GO" id="GO:0006096">
    <property type="term" value="P:glycolytic process"/>
    <property type="evidence" value="ECO:0000318"/>
    <property type="project" value="GO_Central"/>
</dbReference>
<dbReference type="CDD" id="cd03313">
    <property type="entry name" value="enolase"/>
    <property type="match status" value="1"/>
</dbReference>
<dbReference type="FunFam" id="3.20.20.120:FF:000001">
    <property type="entry name" value="Enolase"/>
    <property type="match status" value="1"/>
</dbReference>
<dbReference type="FunFam" id="3.30.390.10:FF:000001">
    <property type="entry name" value="Enolase"/>
    <property type="match status" value="1"/>
</dbReference>
<dbReference type="Gene3D" id="3.20.20.120">
    <property type="entry name" value="Enolase-like C-terminal domain"/>
    <property type="match status" value="1"/>
</dbReference>
<dbReference type="Gene3D" id="3.30.390.10">
    <property type="entry name" value="Enolase-like, N-terminal domain"/>
    <property type="match status" value="1"/>
</dbReference>
<dbReference type="HAMAP" id="MF_00318">
    <property type="entry name" value="Enolase"/>
    <property type="match status" value="1"/>
</dbReference>
<dbReference type="InterPro" id="IPR000941">
    <property type="entry name" value="Enolase"/>
</dbReference>
<dbReference type="InterPro" id="IPR036849">
    <property type="entry name" value="Enolase-like_C_sf"/>
</dbReference>
<dbReference type="InterPro" id="IPR029017">
    <property type="entry name" value="Enolase-like_N"/>
</dbReference>
<dbReference type="InterPro" id="IPR020810">
    <property type="entry name" value="Enolase_C"/>
</dbReference>
<dbReference type="InterPro" id="IPR020809">
    <property type="entry name" value="Enolase_CS"/>
</dbReference>
<dbReference type="InterPro" id="IPR020811">
    <property type="entry name" value="Enolase_N"/>
</dbReference>
<dbReference type="NCBIfam" id="TIGR01060">
    <property type="entry name" value="eno"/>
    <property type="match status" value="1"/>
</dbReference>
<dbReference type="PANTHER" id="PTHR11902">
    <property type="entry name" value="ENOLASE"/>
    <property type="match status" value="1"/>
</dbReference>
<dbReference type="PANTHER" id="PTHR11902:SF1">
    <property type="entry name" value="ENOLASE"/>
    <property type="match status" value="1"/>
</dbReference>
<dbReference type="Pfam" id="PF00113">
    <property type="entry name" value="Enolase_C"/>
    <property type="match status" value="1"/>
</dbReference>
<dbReference type="Pfam" id="PF03952">
    <property type="entry name" value="Enolase_N"/>
    <property type="match status" value="1"/>
</dbReference>
<dbReference type="PIRSF" id="PIRSF001400">
    <property type="entry name" value="Enolase"/>
    <property type="match status" value="1"/>
</dbReference>
<dbReference type="PRINTS" id="PR00148">
    <property type="entry name" value="ENOLASE"/>
</dbReference>
<dbReference type="SFLD" id="SFLDF00002">
    <property type="entry name" value="enolase"/>
    <property type="match status" value="1"/>
</dbReference>
<dbReference type="SFLD" id="SFLDG00178">
    <property type="entry name" value="enolase"/>
    <property type="match status" value="1"/>
</dbReference>
<dbReference type="SMART" id="SM01192">
    <property type="entry name" value="Enolase_C"/>
    <property type="match status" value="1"/>
</dbReference>
<dbReference type="SMART" id="SM01193">
    <property type="entry name" value="Enolase_N"/>
    <property type="match status" value="1"/>
</dbReference>
<dbReference type="SUPFAM" id="SSF51604">
    <property type="entry name" value="Enolase C-terminal domain-like"/>
    <property type="match status" value="1"/>
</dbReference>
<dbReference type="SUPFAM" id="SSF54826">
    <property type="entry name" value="Enolase N-terminal domain-like"/>
    <property type="match status" value="1"/>
</dbReference>
<dbReference type="PROSITE" id="PS00164">
    <property type="entry name" value="ENOLASE"/>
    <property type="match status" value="1"/>
</dbReference>
<feature type="chain" id="PRO_0000133935" description="Enolase">
    <location>
        <begin position="1"/>
        <end position="428"/>
    </location>
</feature>
<feature type="active site" description="Proton donor" evidence="1">
    <location>
        <position position="205"/>
    </location>
</feature>
<feature type="active site" description="Proton acceptor" evidence="1">
    <location>
        <position position="337"/>
    </location>
</feature>
<feature type="binding site" evidence="1">
    <location>
        <position position="163"/>
    </location>
    <ligand>
        <name>(2R)-2-phosphoglycerate</name>
        <dbReference type="ChEBI" id="CHEBI:58289"/>
    </ligand>
</feature>
<feature type="binding site" evidence="1">
    <location>
        <position position="242"/>
    </location>
    <ligand>
        <name>Mg(2+)</name>
        <dbReference type="ChEBI" id="CHEBI:18420"/>
    </ligand>
</feature>
<feature type="binding site" evidence="1">
    <location>
        <position position="285"/>
    </location>
    <ligand>
        <name>Mg(2+)</name>
        <dbReference type="ChEBI" id="CHEBI:18420"/>
    </ligand>
</feature>
<feature type="binding site" evidence="1">
    <location>
        <position position="312"/>
    </location>
    <ligand>
        <name>Mg(2+)</name>
        <dbReference type="ChEBI" id="CHEBI:18420"/>
    </ligand>
</feature>
<feature type="binding site" evidence="1">
    <location>
        <position position="337"/>
    </location>
    <ligand>
        <name>(2R)-2-phosphoglycerate</name>
        <dbReference type="ChEBI" id="CHEBI:58289"/>
    </ligand>
</feature>
<feature type="binding site" evidence="1">
    <location>
        <position position="366"/>
    </location>
    <ligand>
        <name>(2R)-2-phosphoglycerate</name>
        <dbReference type="ChEBI" id="CHEBI:58289"/>
    </ligand>
</feature>
<feature type="binding site" evidence="1">
    <location>
        <position position="367"/>
    </location>
    <ligand>
        <name>(2R)-2-phosphoglycerate</name>
        <dbReference type="ChEBI" id="CHEBI:58289"/>
    </ligand>
</feature>
<feature type="binding site" evidence="1">
    <location>
        <position position="388"/>
    </location>
    <ligand>
        <name>(2R)-2-phosphoglycerate</name>
        <dbReference type="ChEBI" id="CHEBI:58289"/>
    </ligand>
</feature>
<name>ENO_NEIMB</name>
<reference key="1">
    <citation type="journal article" date="2000" name="Science">
        <title>Complete genome sequence of Neisseria meningitidis serogroup B strain MC58.</title>
        <authorList>
            <person name="Tettelin H."/>
            <person name="Saunders N.J."/>
            <person name="Heidelberg J.F."/>
            <person name="Jeffries A.C."/>
            <person name="Nelson K.E."/>
            <person name="Eisen J.A."/>
            <person name="Ketchum K.A."/>
            <person name="Hood D.W."/>
            <person name="Peden J.F."/>
            <person name="Dodson R.J."/>
            <person name="Nelson W.C."/>
            <person name="Gwinn M.L."/>
            <person name="DeBoy R.T."/>
            <person name="Peterson J.D."/>
            <person name="Hickey E.K."/>
            <person name="Haft D.H."/>
            <person name="Salzberg S.L."/>
            <person name="White O."/>
            <person name="Fleischmann R.D."/>
            <person name="Dougherty B.A."/>
            <person name="Mason T.M."/>
            <person name="Ciecko A."/>
            <person name="Parksey D.S."/>
            <person name="Blair E."/>
            <person name="Cittone H."/>
            <person name="Clark E.B."/>
            <person name="Cotton M.D."/>
            <person name="Utterback T.R."/>
            <person name="Khouri H.M."/>
            <person name="Qin H."/>
            <person name="Vamathevan J.J."/>
            <person name="Gill J."/>
            <person name="Scarlato V."/>
            <person name="Masignani V."/>
            <person name="Pizza M."/>
            <person name="Grandi G."/>
            <person name="Sun L."/>
            <person name="Smith H.O."/>
            <person name="Fraser C.M."/>
            <person name="Moxon E.R."/>
            <person name="Rappuoli R."/>
            <person name="Venter J.C."/>
        </authorList>
    </citation>
    <scope>NUCLEOTIDE SEQUENCE [LARGE SCALE GENOMIC DNA]</scope>
    <source>
        <strain>ATCC BAA-335 / MC58</strain>
    </source>
</reference>
<accession>Q9JZ53</accession>
<comment type="function">
    <text evidence="1">Catalyzes the reversible conversion of 2-phosphoglycerate (2-PG) into phosphoenolpyruvate (PEP). It is essential for the degradation of carbohydrates via glycolysis.</text>
</comment>
<comment type="catalytic activity">
    <reaction evidence="1">
        <text>(2R)-2-phosphoglycerate = phosphoenolpyruvate + H2O</text>
        <dbReference type="Rhea" id="RHEA:10164"/>
        <dbReference type="ChEBI" id="CHEBI:15377"/>
        <dbReference type="ChEBI" id="CHEBI:58289"/>
        <dbReference type="ChEBI" id="CHEBI:58702"/>
        <dbReference type="EC" id="4.2.1.11"/>
    </reaction>
</comment>
<comment type="cofactor">
    <cofactor evidence="1">
        <name>Mg(2+)</name>
        <dbReference type="ChEBI" id="CHEBI:18420"/>
    </cofactor>
    <text evidence="1">Binds a second Mg(2+) ion via substrate during catalysis.</text>
</comment>
<comment type="pathway">
    <text evidence="1">Carbohydrate degradation; glycolysis; pyruvate from D-glyceraldehyde 3-phosphate: step 4/5.</text>
</comment>
<comment type="subcellular location">
    <subcellularLocation>
        <location evidence="1">Cytoplasm</location>
    </subcellularLocation>
    <subcellularLocation>
        <location evidence="1">Secreted</location>
    </subcellularLocation>
    <subcellularLocation>
        <location evidence="1">Cell surface</location>
    </subcellularLocation>
    <text evidence="1">Fractions of enolase are present in both the cytoplasm and on the cell surface.</text>
</comment>
<comment type="similarity">
    <text evidence="1">Belongs to the enolase family.</text>
</comment>
<protein>
    <recommendedName>
        <fullName evidence="1">Enolase</fullName>
        <ecNumber evidence="1">4.2.1.11</ecNumber>
    </recommendedName>
    <alternativeName>
        <fullName evidence="1">2-phospho-D-glycerate hydro-lyase</fullName>
    </alternativeName>
    <alternativeName>
        <fullName evidence="1">2-phosphoglycerate dehydratase</fullName>
    </alternativeName>
</protein>
<evidence type="ECO:0000255" key="1">
    <source>
        <dbReference type="HAMAP-Rule" id="MF_00318"/>
    </source>
</evidence>
<organism>
    <name type="scientific">Neisseria meningitidis serogroup B (strain ATCC BAA-335 / MC58)</name>
    <dbReference type="NCBI Taxonomy" id="122586"/>
    <lineage>
        <taxon>Bacteria</taxon>
        <taxon>Pseudomonadati</taxon>
        <taxon>Pseudomonadota</taxon>
        <taxon>Betaproteobacteria</taxon>
        <taxon>Neisseriales</taxon>
        <taxon>Neisseriaceae</taxon>
        <taxon>Neisseria</taxon>
    </lineage>
</organism>
<gene>
    <name evidence="1" type="primary">eno</name>
    <name type="ordered locus">NMB1285</name>
</gene>
<keyword id="KW-0963">Cytoplasm</keyword>
<keyword id="KW-0324">Glycolysis</keyword>
<keyword id="KW-0456">Lyase</keyword>
<keyword id="KW-0460">Magnesium</keyword>
<keyword id="KW-0479">Metal-binding</keyword>
<keyword id="KW-1185">Reference proteome</keyword>
<keyword id="KW-0964">Secreted</keyword>